<keyword id="KW-0227">DNA damage</keyword>
<keyword id="KW-0233">DNA recombination</keyword>
<keyword id="KW-0234">DNA repair</keyword>
<keyword id="KW-1185">Reference proteome</keyword>
<dbReference type="EMBL" id="AE005174">
    <property type="protein sequence ID" value="AAG57680.1"/>
    <property type="molecule type" value="Genomic_DNA"/>
</dbReference>
<dbReference type="EMBL" id="BA000007">
    <property type="protein sequence ID" value="BAB36854.1"/>
    <property type="molecule type" value="Genomic_DNA"/>
</dbReference>
<dbReference type="PIR" id="D85902">
    <property type="entry name" value="D85902"/>
</dbReference>
<dbReference type="PIR" id="G91057">
    <property type="entry name" value="G91057"/>
</dbReference>
<dbReference type="RefSeq" id="NP_311458.1">
    <property type="nucleotide sequence ID" value="NC_002695.1"/>
</dbReference>
<dbReference type="RefSeq" id="WP_000399404.1">
    <property type="nucleotide sequence ID" value="NZ_VOAI01000001.1"/>
</dbReference>
<dbReference type="SMR" id="P0A7H5"/>
<dbReference type="STRING" id="155864.Z3846"/>
<dbReference type="GeneID" id="914896"/>
<dbReference type="KEGG" id="ece:Z3846"/>
<dbReference type="KEGG" id="ecs:ECs_3431"/>
<dbReference type="PATRIC" id="fig|386585.9.peg.3585"/>
<dbReference type="eggNOG" id="COG1381">
    <property type="taxonomic scope" value="Bacteria"/>
</dbReference>
<dbReference type="HOGENOM" id="CLU_066645_1_0_6"/>
<dbReference type="OMA" id="YVLHSRA"/>
<dbReference type="Proteomes" id="UP000000558">
    <property type="component" value="Chromosome"/>
</dbReference>
<dbReference type="Proteomes" id="UP000002519">
    <property type="component" value="Chromosome"/>
</dbReference>
<dbReference type="GO" id="GO:0043590">
    <property type="term" value="C:bacterial nucleoid"/>
    <property type="evidence" value="ECO:0007669"/>
    <property type="project" value="TreeGrafter"/>
</dbReference>
<dbReference type="GO" id="GO:0006310">
    <property type="term" value="P:DNA recombination"/>
    <property type="evidence" value="ECO:0007669"/>
    <property type="project" value="UniProtKB-UniRule"/>
</dbReference>
<dbReference type="GO" id="GO:0006302">
    <property type="term" value="P:double-strand break repair"/>
    <property type="evidence" value="ECO:0007669"/>
    <property type="project" value="TreeGrafter"/>
</dbReference>
<dbReference type="FunFam" id="1.20.1440.120:FF:000001">
    <property type="entry name" value="DNA repair protein RecO"/>
    <property type="match status" value="1"/>
</dbReference>
<dbReference type="FunFam" id="2.40.50.140:FF:000074">
    <property type="entry name" value="DNA repair protein RecO"/>
    <property type="match status" value="1"/>
</dbReference>
<dbReference type="Gene3D" id="2.40.50.140">
    <property type="entry name" value="Nucleic acid-binding proteins"/>
    <property type="match status" value="1"/>
</dbReference>
<dbReference type="Gene3D" id="1.20.1440.120">
    <property type="entry name" value="Recombination protein O, C-terminal domain"/>
    <property type="match status" value="1"/>
</dbReference>
<dbReference type="HAMAP" id="MF_00201">
    <property type="entry name" value="RecO"/>
    <property type="match status" value="1"/>
</dbReference>
<dbReference type="InterPro" id="IPR037278">
    <property type="entry name" value="ARFGAP/RecO"/>
</dbReference>
<dbReference type="InterPro" id="IPR022572">
    <property type="entry name" value="DNA_rep/recomb_RecO_N"/>
</dbReference>
<dbReference type="InterPro" id="IPR012340">
    <property type="entry name" value="NA-bd_OB-fold"/>
</dbReference>
<dbReference type="InterPro" id="IPR003717">
    <property type="entry name" value="RecO"/>
</dbReference>
<dbReference type="InterPro" id="IPR042242">
    <property type="entry name" value="RecO_C"/>
</dbReference>
<dbReference type="NCBIfam" id="TIGR00613">
    <property type="entry name" value="reco"/>
    <property type="match status" value="1"/>
</dbReference>
<dbReference type="PANTHER" id="PTHR33991">
    <property type="entry name" value="DNA REPAIR PROTEIN RECO"/>
    <property type="match status" value="1"/>
</dbReference>
<dbReference type="PANTHER" id="PTHR33991:SF1">
    <property type="entry name" value="DNA REPAIR PROTEIN RECO"/>
    <property type="match status" value="1"/>
</dbReference>
<dbReference type="Pfam" id="PF02565">
    <property type="entry name" value="RecO_C"/>
    <property type="match status" value="1"/>
</dbReference>
<dbReference type="Pfam" id="PF11967">
    <property type="entry name" value="RecO_N"/>
    <property type="match status" value="1"/>
</dbReference>
<dbReference type="SUPFAM" id="SSF57863">
    <property type="entry name" value="ArfGap/RecO-like zinc finger"/>
    <property type="match status" value="1"/>
</dbReference>
<dbReference type="SUPFAM" id="SSF50249">
    <property type="entry name" value="Nucleic acid-binding proteins"/>
    <property type="match status" value="1"/>
</dbReference>
<gene>
    <name type="primary">recO</name>
    <name type="ordered locus">Z3846</name>
    <name type="ordered locus">ECs3431</name>
</gene>
<comment type="function">
    <text evidence="1">Involved in DNA repair and RecF pathway recombination.</text>
</comment>
<comment type="subunit">
    <text evidence="1">Monomer.</text>
</comment>
<comment type="similarity">
    <text evidence="2">Belongs to the RecO family.</text>
</comment>
<organism>
    <name type="scientific">Escherichia coli O157:H7</name>
    <dbReference type="NCBI Taxonomy" id="83334"/>
    <lineage>
        <taxon>Bacteria</taxon>
        <taxon>Pseudomonadati</taxon>
        <taxon>Pseudomonadota</taxon>
        <taxon>Gammaproteobacteria</taxon>
        <taxon>Enterobacterales</taxon>
        <taxon>Enterobacteriaceae</taxon>
        <taxon>Escherichia</taxon>
    </lineage>
</organism>
<sequence>MEGWQRAFVLHSRPWSETSLMLDVFTEESGRVRLVAKGARSKRSTLKGALQPFTPLLLRFGGRGEVKTLRSAEAVSLALPLSGITLYSGLYINELLSRVLEYETRFSELFFDYLHCIQSLAGVTGTPEPALRRFELALLGHLGYGVNFTHCAGSGEPVDDTMTYRYREEKGFIASVVIDNKTFTGRQLKALNAREFPDADTLRAAKRFTRMALKPYLGGKPLKSRELFRQFMPKRTVKTHYE</sequence>
<feature type="chain" id="PRO_0000204950" description="DNA repair protein RecO">
    <location>
        <begin position="1"/>
        <end position="242"/>
    </location>
</feature>
<name>RECO_ECO57</name>
<reference key="1">
    <citation type="journal article" date="2001" name="Nature">
        <title>Genome sequence of enterohaemorrhagic Escherichia coli O157:H7.</title>
        <authorList>
            <person name="Perna N.T."/>
            <person name="Plunkett G. III"/>
            <person name="Burland V."/>
            <person name="Mau B."/>
            <person name="Glasner J.D."/>
            <person name="Rose D.J."/>
            <person name="Mayhew G.F."/>
            <person name="Evans P.S."/>
            <person name="Gregor J."/>
            <person name="Kirkpatrick H.A."/>
            <person name="Posfai G."/>
            <person name="Hackett J."/>
            <person name="Klink S."/>
            <person name="Boutin A."/>
            <person name="Shao Y."/>
            <person name="Miller L."/>
            <person name="Grotbeck E.J."/>
            <person name="Davis N.W."/>
            <person name="Lim A."/>
            <person name="Dimalanta E.T."/>
            <person name="Potamousis K."/>
            <person name="Apodaca J."/>
            <person name="Anantharaman T.S."/>
            <person name="Lin J."/>
            <person name="Yen G."/>
            <person name="Schwartz D.C."/>
            <person name="Welch R.A."/>
            <person name="Blattner F.R."/>
        </authorList>
    </citation>
    <scope>NUCLEOTIDE SEQUENCE [LARGE SCALE GENOMIC DNA]</scope>
    <source>
        <strain>O157:H7 / EDL933 / ATCC 700927 / EHEC</strain>
    </source>
</reference>
<reference key="2">
    <citation type="journal article" date="2001" name="DNA Res.">
        <title>Complete genome sequence of enterohemorrhagic Escherichia coli O157:H7 and genomic comparison with a laboratory strain K-12.</title>
        <authorList>
            <person name="Hayashi T."/>
            <person name="Makino K."/>
            <person name="Ohnishi M."/>
            <person name="Kurokawa K."/>
            <person name="Ishii K."/>
            <person name="Yokoyama K."/>
            <person name="Han C.-G."/>
            <person name="Ohtsubo E."/>
            <person name="Nakayama K."/>
            <person name="Murata T."/>
            <person name="Tanaka M."/>
            <person name="Tobe T."/>
            <person name="Iida T."/>
            <person name="Takami H."/>
            <person name="Honda T."/>
            <person name="Sasakawa C."/>
            <person name="Ogasawara N."/>
            <person name="Yasunaga T."/>
            <person name="Kuhara S."/>
            <person name="Shiba T."/>
            <person name="Hattori M."/>
            <person name="Shinagawa H."/>
        </authorList>
    </citation>
    <scope>NUCLEOTIDE SEQUENCE [LARGE SCALE GENOMIC DNA]</scope>
    <source>
        <strain>O157:H7 / Sakai / RIMD 0509952 / EHEC</strain>
    </source>
</reference>
<proteinExistence type="inferred from homology"/>
<accession>P0A7H5</accession>
<accession>P15027</accession>
<accession>P76589</accession>
<evidence type="ECO:0000250" key="1"/>
<evidence type="ECO:0000305" key="2"/>
<protein>
    <recommendedName>
        <fullName>DNA repair protein RecO</fullName>
    </recommendedName>
    <alternativeName>
        <fullName>Recombination protein O</fullName>
    </alternativeName>
</protein>